<sequence>MSTFIVVFLLLTAILCHAEHAIDETARGCNRLNKKCNSDADCCRYGERCISTGVNYYCRPDFGP</sequence>
<protein>
    <recommendedName>
        <fullName evidence="4">Neurotoxin lambda-MeuTx</fullName>
    </recommendedName>
    <alternativeName>
        <fullName>Calcium channel toxin-like peptide-1</fullName>
    </alternativeName>
</protein>
<feature type="signal peptide" evidence="2">
    <location>
        <begin position="1"/>
        <end position="18"/>
    </location>
</feature>
<feature type="propeptide" id="PRO_0000408389" evidence="3">
    <location>
        <begin position="19"/>
        <end position="27"/>
    </location>
</feature>
<feature type="peptide" id="PRO_0000401130" description="Neurotoxin lambda-MeuTx" evidence="3">
    <location>
        <begin position="28"/>
        <end position="64"/>
    </location>
</feature>
<feature type="disulfide bond" evidence="6">
    <location>
        <begin position="29"/>
        <end position="43"/>
    </location>
</feature>
<feature type="disulfide bond" evidence="6">
    <location>
        <begin position="36"/>
        <end position="49"/>
    </location>
</feature>
<feature type="disulfide bond" evidence="6">
    <location>
        <begin position="42"/>
        <end position="58"/>
    </location>
</feature>
<feature type="sequence conflict" description="In Ref. 2; AA sequence." evidence="5" ref="2">
    <original>L</original>
    <variation>K</variation>
    <location>
        <position position="32"/>
    </location>
</feature>
<feature type="sequence conflict" description="In Ref. 2; AA sequence." evidence="5" ref="2">
    <original>G</original>
    <variation>K</variation>
    <location>
        <position position="53"/>
    </location>
</feature>
<feature type="sequence conflict" description="In Ref. 2; AA sequence." evidence="5" ref="2">
    <original>F</original>
    <variation>R</variation>
    <location>
        <position position="62"/>
    </location>
</feature>
<feature type="helix" evidence="7">
    <location>
        <begin position="39"/>
        <end position="41"/>
    </location>
</feature>
<feature type="strand" evidence="7">
    <location>
        <begin position="44"/>
        <end position="51"/>
    </location>
</feature>
<feature type="strand" evidence="7">
    <location>
        <begin position="53"/>
        <end position="60"/>
    </location>
</feature>
<evidence type="ECO:0000250" key="1">
    <source>
        <dbReference type="UniProtKB" id="P0DM29"/>
    </source>
</evidence>
<evidence type="ECO:0000255" key="2"/>
<evidence type="ECO:0000269" key="3">
    <source ref="2"/>
</evidence>
<evidence type="ECO:0000303" key="4">
    <source ref="2"/>
</evidence>
<evidence type="ECO:0000305" key="5"/>
<evidence type="ECO:0007744" key="6">
    <source>
        <dbReference type="PDB" id="8F2F"/>
    </source>
</evidence>
<evidence type="ECO:0007829" key="7">
    <source>
        <dbReference type="PDB" id="8F2F"/>
    </source>
</evidence>
<accession>P86399</accession>
<accession>E4VP58</accession>
<name>CLML_MESEU</name>
<organism>
    <name type="scientific">Mesobuthus eupeus</name>
    <name type="common">Lesser Asian scorpion</name>
    <name type="synonym">Buthus eupeus</name>
    <dbReference type="NCBI Taxonomy" id="34648"/>
    <lineage>
        <taxon>Eukaryota</taxon>
        <taxon>Metazoa</taxon>
        <taxon>Ecdysozoa</taxon>
        <taxon>Arthropoda</taxon>
        <taxon>Chelicerata</taxon>
        <taxon>Arachnida</taxon>
        <taxon>Scorpiones</taxon>
        <taxon>Buthida</taxon>
        <taxon>Buthoidea</taxon>
        <taxon>Buthidae</taxon>
        <taxon>Mesobuthus</taxon>
    </lineage>
</organism>
<comment type="function">
    <text evidence="1 3">Voltage-gated potassium channel (Kv) inhibitor (Ref.2). In addition it may increase intracellular calcium release through the activation of nuclear inositol 1,4,5-trisphosphate receptors (ITPR) of cardiomyocytes, thereby causing an increase in the contraction frequency of these cells (By similarity).</text>
</comment>
<comment type="subcellular location">
    <subcellularLocation>
        <location evidence="3">Secreted</location>
    </subcellularLocation>
</comment>
<comment type="tissue specificity">
    <text evidence="3">Expressed by the venom gland.</text>
</comment>
<comment type="domain">
    <text evidence="5">The presence of a 'disulfide through disulfide knot' structurally defines this protein as a knottin.</text>
</comment>
<comment type="similarity">
    <text evidence="5">Belongs to the scorpion calcin-like family.</text>
</comment>
<keyword id="KW-0002">3D-structure</keyword>
<keyword id="KW-0108">Calcium channel impairing toxin</keyword>
<keyword id="KW-0903">Direct protein sequencing</keyword>
<keyword id="KW-1015">Disulfide bond</keyword>
<keyword id="KW-0872">Ion channel impairing toxin</keyword>
<keyword id="KW-0960">Knottin</keyword>
<keyword id="KW-0528">Neurotoxin</keyword>
<keyword id="KW-0632">Potassium channel impairing toxin</keyword>
<keyword id="KW-1219">Ryanodine-sensitive calcium-release channel impairing toxin</keyword>
<keyword id="KW-0964">Secreted</keyword>
<keyword id="KW-0732">Signal</keyword>
<keyword id="KW-0800">Toxin</keyword>
<reference key="1">
    <citation type="submission" date="2007-02" db="EMBL/GenBank/DDBJ databases">
        <title>Molecular characterization and genomic organization of a venom calcium channel toxin-like peptide (Mevcalcinelip-1) from Mesobuthus eupeus.</title>
        <authorList>
            <person name="Zhu S."/>
            <person name="Gao B."/>
        </authorList>
    </citation>
    <scope>NUCLEOTIDE SEQUENCE [GENOMIC DNA / MRNA]</scope>
</reference>
<reference key="2">
    <citation type="submission" date="2009-11" db="UniProtKB">
        <title>Characterization of a Kv channel blocker with inhibitor cystine knot (ICK) structural motif from the Mesobuthus eupeus venom.</title>
        <authorList>
            <person name="Zhu S.Y."/>
            <person name="Gao B."/>
        </authorList>
    </citation>
    <scope>PROTEIN SEQUENCE OF 28-64</scope>
    <scope>FUNCTION</scope>
    <scope>SUBCELLULAR LOCATION</scope>
    <scope>TISSUE SPECIFICITY</scope>
    <source>
        <tissue evidence="3">Venom</tissue>
    </source>
</reference>
<proteinExistence type="evidence at protein level"/>
<dbReference type="EMBL" id="EF445100">
    <property type="protein sequence ID" value="ABR21075.1"/>
    <property type="molecule type" value="mRNA"/>
</dbReference>
<dbReference type="EMBL" id="EF445101">
    <property type="protein sequence ID" value="ABR21076.1"/>
    <property type="molecule type" value="Genomic_DNA"/>
</dbReference>
<dbReference type="PDB" id="8F2F">
    <property type="method" value="NMR"/>
    <property type="chains" value="A=28-64"/>
</dbReference>
<dbReference type="PDBsum" id="8F2F"/>
<dbReference type="SMR" id="P86399"/>
<dbReference type="GO" id="GO:0005576">
    <property type="term" value="C:extracellular region"/>
    <property type="evidence" value="ECO:0007669"/>
    <property type="project" value="UniProtKB-SubCell"/>
</dbReference>
<dbReference type="GO" id="GO:0005246">
    <property type="term" value="F:calcium channel regulator activity"/>
    <property type="evidence" value="ECO:0007669"/>
    <property type="project" value="UniProtKB-KW"/>
</dbReference>
<dbReference type="GO" id="GO:0015459">
    <property type="term" value="F:potassium channel regulator activity"/>
    <property type="evidence" value="ECO:0007669"/>
    <property type="project" value="UniProtKB-KW"/>
</dbReference>
<dbReference type="GO" id="GO:0090729">
    <property type="term" value="F:toxin activity"/>
    <property type="evidence" value="ECO:0007669"/>
    <property type="project" value="UniProtKB-KW"/>
</dbReference>